<evidence type="ECO:0000250" key="1"/>
<evidence type="ECO:0000305" key="2"/>
<evidence type="ECO:0000305" key="3">
    <source>
    </source>
</evidence>
<proteinExistence type="evidence at protein level"/>
<sequence length="131" mass="14159">MSWQAYVDEHLMCEIEGHHLASAAILGHDGTVWAQSADFPQFKPEEITGIMKDFDEPGHLAPTGMFVATAKYMVIQGEPGAVIRGKKGAGGITIKKTGQALVVGIYDEPMTPGQCNMVVERLGDYLLKQGL</sequence>
<organism>
    <name type="scientific">Olea europaea</name>
    <name type="common">Common olive</name>
    <dbReference type="NCBI Taxonomy" id="4146"/>
    <lineage>
        <taxon>Eukaryota</taxon>
        <taxon>Viridiplantae</taxon>
        <taxon>Streptophyta</taxon>
        <taxon>Embryophyta</taxon>
        <taxon>Tracheophyta</taxon>
        <taxon>Spermatophyta</taxon>
        <taxon>Magnoliopsida</taxon>
        <taxon>eudicotyledons</taxon>
        <taxon>Gunneridae</taxon>
        <taxon>Pentapetalae</taxon>
        <taxon>asterids</taxon>
        <taxon>lamiids</taxon>
        <taxon>Lamiales</taxon>
        <taxon>Oleaceae</taxon>
        <taxon>Oleeae</taxon>
        <taxon>Olea</taxon>
    </lineage>
</organism>
<reference key="1">
    <citation type="journal article" date="2012" name="PLoS ONE">
        <title>Characterization of profilin polymorphism in pollen with a focus on multifunctionality.</title>
        <authorList>
            <person name="Jimenez-Lopez J.C."/>
            <person name="Morales S."/>
            <person name="Castro A.J."/>
            <person name="Volkmann D."/>
            <person name="Rodriguez-Garcia M.I."/>
            <person name="Alche Jde D."/>
        </authorList>
    </citation>
    <scope>NUCLEOTIDE SEQUENCE [MRNA]</scope>
    <scope>POLYMORPHISM</scope>
    <source>
        <strain>cv. Picual</strain>
    </source>
</reference>
<reference key="2">
    <citation type="journal article" date="2013" name="PLoS ONE">
        <title>Analysis of the effects of polymorphism on pollen profilin structural functionality and the generation of conformational, T- and B-cell epitopes.</title>
        <authorList>
            <person name="Jimenez-Lopez J.C."/>
            <person name="Rodriguez-Garcia M.I."/>
            <person name="Alche J.D."/>
        </authorList>
    </citation>
    <scope>3D-STRUCTURE MODELING</scope>
    <scope>DISULFIDE BOND</scope>
</reference>
<accession>A4KA49</accession>
<keyword id="KW-0009">Actin-binding</keyword>
<keyword id="KW-0020">Allergen</keyword>
<keyword id="KW-0963">Cytoplasm</keyword>
<keyword id="KW-0206">Cytoskeleton</keyword>
<keyword id="KW-1015">Disulfide bond</keyword>
<keyword id="KW-0597">Phosphoprotein</keyword>
<dbReference type="EMBL" id="DQ663553">
    <property type="protein sequence ID" value="ABG81306.1"/>
    <property type="molecule type" value="mRNA"/>
</dbReference>
<dbReference type="SMR" id="A4KA49"/>
<dbReference type="Allergome" id="490">
    <property type="allergen name" value="Ole e 2"/>
</dbReference>
<dbReference type="GO" id="GO:0005938">
    <property type="term" value="C:cell cortex"/>
    <property type="evidence" value="ECO:0007669"/>
    <property type="project" value="TreeGrafter"/>
</dbReference>
<dbReference type="GO" id="GO:0005856">
    <property type="term" value="C:cytoskeleton"/>
    <property type="evidence" value="ECO:0007669"/>
    <property type="project" value="UniProtKB-SubCell"/>
</dbReference>
<dbReference type="GO" id="GO:0003785">
    <property type="term" value="F:actin monomer binding"/>
    <property type="evidence" value="ECO:0007669"/>
    <property type="project" value="TreeGrafter"/>
</dbReference>
<dbReference type="CDD" id="cd00148">
    <property type="entry name" value="PROF"/>
    <property type="match status" value="1"/>
</dbReference>
<dbReference type="FunFam" id="3.30.450.30:FF:000001">
    <property type="entry name" value="Profilin"/>
    <property type="match status" value="1"/>
</dbReference>
<dbReference type="Gene3D" id="3.30.450.30">
    <property type="entry name" value="Dynein light chain 2a, cytoplasmic"/>
    <property type="match status" value="1"/>
</dbReference>
<dbReference type="InterPro" id="IPR048278">
    <property type="entry name" value="PFN"/>
</dbReference>
<dbReference type="InterPro" id="IPR005455">
    <property type="entry name" value="PFN_euk"/>
</dbReference>
<dbReference type="InterPro" id="IPR036140">
    <property type="entry name" value="PFN_sf"/>
</dbReference>
<dbReference type="InterPro" id="IPR027310">
    <property type="entry name" value="Profilin_CS"/>
</dbReference>
<dbReference type="PANTHER" id="PTHR11604">
    <property type="entry name" value="PROFILIN"/>
    <property type="match status" value="1"/>
</dbReference>
<dbReference type="PANTHER" id="PTHR11604:SF31">
    <property type="entry name" value="PROFILIN"/>
    <property type="match status" value="1"/>
</dbReference>
<dbReference type="Pfam" id="PF00235">
    <property type="entry name" value="Profilin"/>
    <property type="match status" value="1"/>
</dbReference>
<dbReference type="PRINTS" id="PR00392">
    <property type="entry name" value="PROFILIN"/>
</dbReference>
<dbReference type="PRINTS" id="PR01640">
    <property type="entry name" value="PROFILINPLNT"/>
</dbReference>
<dbReference type="SMART" id="SM00392">
    <property type="entry name" value="PROF"/>
    <property type="match status" value="1"/>
</dbReference>
<dbReference type="SUPFAM" id="SSF55770">
    <property type="entry name" value="Profilin (actin-binding protein)"/>
    <property type="match status" value="1"/>
</dbReference>
<dbReference type="PROSITE" id="PS00414">
    <property type="entry name" value="PROFILIN"/>
    <property type="match status" value="1"/>
</dbReference>
<feature type="initiator methionine" description="Removed" evidence="1">
    <location>
        <position position="1"/>
    </location>
</feature>
<feature type="chain" id="PRO_0000425052" description="Profilin-4">
    <location>
        <begin position="2"/>
        <end position="131"/>
    </location>
</feature>
<feature type="short sequence motif" description="Involved in PIP2 interaction">
    <location>
        <begin position="81"/>
        <end position="97"/>
    </location>
</feature>
<feature type="modified residue" description="Phosphothreonine" evidence="1">
    <location>
        <position position="111"/>
    </location>
</feature>
<feature type="disulfide bond" evidence="3">
    <location>
        <begin position="13"/>
        <end position="115"/>
    </location>
</feature>
<comment type="function">
    <text evidence="1">Binds to actin and affects the structure of the cytoskeleton. At high concentrations, profilin prevents the polymerization of actin, whereas it enhances it at low concentrations (By similarity).</text>
</comment>
<comment type="subunit">
    <text evidence="1">Occurs in many kinds of cells as a complex with monomeric actin in a 1:1 ratio.</text>
</comment>
<comment type="subcellular location">
    <subcellularLocation>
        <location evidence="1">Cytoplasm</location>
        <location evidence="1">Cytoskeleton</location>
    </subcellularLocation>
</comment>
<comment type="PTM">
    <text evidence="1">Phosphorylated by MAP kinases.</text>
</comment>
<comment type="polymorphism">
    <text>Several isoforms of the allergen exist due to polymorphism.</text>
</comment>
<comment type="allergen">
    <text>Causes an allergic reaction in human.</text>
</comment>
<comment type="miscellaneous">
    <text evidence="3">The variability of the residues taking part of IgE-binding epitopes might be responsible of the difference in cross-reactivity among olive pollen cultivars, and between distantly related pollen species, leading to a variable range of allergy reactions among atopic patients.</text>
</comment>
<comment type="similarity">
    <text evidence="2">Belongs to the profilin family.</text>
</comment>
<name>PROCI_OLEEU</name>
<protein>
    <recommendedName>
        <fullName>Profilin-4</fullName>
    </recommendedName>
    <alternativeName>
        <fullName>Pollen allergen Ole e 2</fullName>
    </alternativeName>
    <allergenName>Ole e 2</allergenName>
</protein>